<organism>
    <name type="scientific">Campylobacter jejuni subsp. doylei (strain ATCC BAA-1458 / RM4099 / 269.97)</name>
    <dbReference type="NCBI Taxonomy" id="360109"/>
    <lineage>
        <taxon>Bacteria</taxon>
        <taxon>Pseudomonadati</taxon>
        <taxon>Campylobacterota</taxon>
        <taxon>Epsilonproteobacteria</taxon>
        <taxon>Campylobacterales</taxon>
        <taxon>Campylobacteraceae</taxon>
        <taxon>Campylobacter</taxon>
    </lineage>
</organism>
<name>DXR_CAMJD</name>
<feature type="chain" id="PRO_1000020239" description="1-deoxy-D-xylulose 5-phosphate reductoisomerase">
    <location>
        <begin position="1"/>
        <end position="356"/>
    </location>
</feature>
<feature type="binding site" evidence="1">
    <location>
        <position position="7"/>
    </location>
    <ligand>
        <name>NADPH</name>
        <dbReference type="ChEBI" id="CHEBI:57783"/>
    </ligand>
</feature>
<feature type="binding site" evidence="1">
    <location>
        <position position="8"/>
    </location>
    <ligand>
        <name>NADPH</name>
        <dbReference type="ChEBI" id="CHEBI:57783"/>
    </ligand>
</feature>
<feature type="binding site" evidence="1">
    <location>
        <position position="9"/>
    </location>
    <ligand>
        <name>NADPH</name>
        <dbReference type="ChEBI" id="CHEBI:57783"/>
    </ligand>
</feature>
<feature type="binding site" evidence="1">
    <location>
        <position position="10"/>
    </location>
    <ligand>
        <name>NADPH</name>
        <dbReference type="ChEBI" id="CHEBI:57783"/>
    </ligand>
</feature>
<feature type="binding site" evidence="1">
    <location>
        <position position="31"/>
    </location>
    <ligand>
        <name>NADPH</name>
        <dbReference type="ChEBI" id="CHEBI:57783"/>
    </ligand>
</feature>
<feature type="binding site" evidence="1">
    <location>
        <position position="33"/>
    </location>
    <ligand>
        <name>NADPH</name>
        <dbReference type="ChEBI" id="CHEBI:57783"/>
    </ligand>
</feature>
<feature type="binding site" evidence="1">
    <location>
        <position position="111"/>
    </location>
    <ligand>
        <name>NADPH</name>
        <dbReference type="ChEBI" id="CHEBI:57783"/>
    </ligand>
</feature>
<feature type="binding site" evidence="1">
    <location>
        <position position="112"/>
    </location>
    <ligand>
        <name>1-deoxy-D-xylulose 5-phosphate</name>
        <dbReference type="ChEBI" id="CHEBI:57792"/>
    </ligand>
</feature>
<feature type="binding site" evidence="1">
    <location>
        <position position="113"/>
    </location>
    <ligand>
        <name>NADPH</name>
        <dbReference type="ChEBI" id="CHEBI:57783"/>
    </ligand>
</feature>
<feature type="binding site" evidence="1">
    <location>
        <position position="131"/>
    </location>
    <ligand>
        <name>Mn(2+)</name>
        <dbReference type="ChEBI" id="CHEBI:29035"/>
    </ligand>
</feature>
<feature type="binding site" evidence="1">
    <location>
        <position position="132"/>
    </location>
    <ligand>
        <name>1-deoxy-D-xylulose 5-phosphate</name>
        <dbReference type="ChEBI" id="CHEBI:57792"/>
    </ligand>
</feature>
<feature type="binding site" evidence="1">
    <location>
        <position position="133"/>
    </location>
    <ligand>
        <name>1-deoxy-D-xylulose 5-phosphate</name>
        <dbReference type="ChEBI" id="CHEBI:57792"/>
    </ligand>
</feature>
<feature type="binding site" evidence="1">
    <location>
        <position position="133"/>
    </location>
    <ligand>
        <name>Mn(2+)</name>
        <dbReference type="ChEBI" id="CHEBI:29035"/>
    </ligand>
</feature>
<feature type="binding site" evidence="1">
    <location>
        <position position="155"/>
    </location>
    <ligand>
        <name>1-deoxy-D-xylulose 5-phosphate</name>
        <dbReference type="ChEBI" id="CHEBI:57792"/>
    </ligand>
</feature>
<feature type="binding site" evidence="1">
    <location>
        <position position="178"/>
    </location>
    <ligand>
        <name>1-deoxy-D-xylulose 5-phosphate</name>
        <dbReference type="ChEBI" id="CHEBI:57792"/>
    </ligand>
</feature>
<feature type="binding site" evidence="1">
    <location>
        <position position="184"/>
    </location>
    <ligand>
        <name>NADPH</name>
        <dbReference type="ChEBI" id="CHEBI:57783"/>
    </ligand>
</feature>
<feature type="binding site" evidence="1">
    <location>
        <position position="191"/>
    </location>
    <ligand>
        <name>1-deoxy-D-xylulose 5-phosphate</name>
        <dbReference type="ChEBI" id="CHEBI:57792"/>
    </ligand>
</feature>
<feature type="binding site" evidence="1">
    <location>
        <position position="196"/>
    </location>
    <ligand>
        <name>1-deoxy-D-xylulose 5-phosphate</name>
        <dbReference type="ChEBI" id="CHEBI:57792"/>
    </ligand>
</feature>
<feature type="binding site" evidence="1">
    <location>
        <position position="197"/>
    </location>
    <ligand>
        <name>1-deoxy-D-xylulose 5-phosphate</name>
        <dbReference type="ChEBI" id="CHEBI:57792"/>
    </ligand>
</feature>
<feature type="binding site" evidence="1">
    <location>
        <position position="200"/>
    </location>
    <ligand>
        <name>1-deoxy-D-xylulose 5-phosphate</name>
        <dbReference type="ChEBI" id="CHEBI:57792"/>
    </ligand>
</feature>
<feature type="binding site" evidence="1">
    <location>
        <position position="200"/>
    </location>
    <ligand>
        <name>Mn(2+)</name>
        <dbReference type="ChEBI" id="CHEBI:29035"/>
    </ligand>
</feature>
<evidence type="ECO:0000255" key="1">
    <source>
        <dbReference type="HAMAP-Rule" id="MF_00183"/>
    </source>
</evidence>
<keyword id="KW-0414">Isoprene biosynthesis</keyword>
<keyword id="KW-0464">Manganese</keyword>
<keyword id="KW-0479">Metal-binding</keyword>
<keyword id="KW-0521">NADP</keyword>
<keyword id="KW-0560">Oxidoreductase</keyword>
<sequence>MILFGSTGSIGVNALKLAALKNIPISALACGDNIALLNEQIARFKPQFVAIKDSKNKHLVKHDRVFIGQEGLEQILTECQDRLLLNAIVGFAGLKSTLKAKELGKNIALANKESLVVAGSFLKGAKFLPIDSEHVALKFLLEGKKNIAKLYITASGGAFYKYKIKDLNQVSVKDALKHPNWNMGAKITIDSATMANKLFEIIEAYHLYDFKESDALIEPRSLVHAMCEFKNGASTAYFSKADMKLAISDAIFEKQDTPILEAVDFSKMPALKFHKISTKKYPIFKLKNAFLKEPNLGVIINAANEVGVYNFLENKSGFLDIAQCIFKALDHFGAPKISSIEEVFEYDFKTREYLRS</sequence>
<gene>
    <name evidence="1" type="primary">dxr</name>
    <name type="ordered locus">JJD26997_0364</name>
</gene>
<comment type="function">
    <text evidence="1">Catalyzes the NADPH-dependent rearrangement and reduction of 1-deoxy-D-xylulose-5-phosphate (DXP) to 2-C-methyl-D-erythritol 4-phosphate (MEP).</text>
</comment>
<comment type="catalytic activity">
    <reaction evidence="1">
        <text>2-C-methyl-D-erythritol 4-phosphate + NADP(+) = 1-deoxy-D-xylulose 5-phosphate + NADPH + H(+)</text>
        <dbReference type="Rhea" id="RHEA:13717"/>
        <dbReference type="ChEBI" id="CHEBI:15378"/>
        <dbReference type="ChEBI" id="CHEBI:57783"/>
        <dbReference type="ChEBI" id="CHEBI:57792"/>
        <dbReference type="ChEBI" id="CHEBI:58262"/>
        <dbReference type="ChEBI" id="CHEBI:58349"/>
        <dbReference type="EC" id="1.1.1.267"/>
    </reaction>
    <physiologicalReaction direction="right-to-left" evidence="1">
        <dbReference type="Rhea" id="RHEA:13719"/>
    </physiologicalReaction>
</comment>
<comment type="cofactor">
    <cofactor evidence="1">
        <name>Mg(2+)</name>
        <dbReference type="ChEBI" id="CHEBI:18420"/>
    </cofactor>
    <cofactor evidence="1">
        <name>Mn(2+)</name>
        <dbReference type="ChEBI" id="CHEBI:29035"/>
    </cofactor>
</comment>
<comment type="pathway">
    <text evidence="1">Isoprenoid biosynthesis; isopentenyl diphosphate biosynthesis via DXP pathway; isopentenyl diphosphate from 1-deoxy-D-xylulose 5-phosphate: step 1/6.</text>
</comment>
<comment type="similarity">
    <text evidence="1">Belongs to the DXR family.</text>
</comment>
<dbReference type="EC" id="1.1.1.267" evidence="1"/>
<dbReference type="EMBL" id="CP000768">
    <property type="protein sequence ID" value="ABS43260.1"/>
    <property type="molecule type" value="Genomic_DNA"/>
</dbReference>
<dbReference type="SMR" id="A7H243"/>
<dbReference type="KEGG" id="cjd:JJD26997_0364"/>
<dbReference type="HOGENOM" id="CLU_035714_0_0_7"/>
<dbReference type="UniPathway" id="UPA00056">
    <property type="reaction ID" value="UER00092"/>
</dbReference>
<dbReference type="Proteomes" id="UP000002302">
    <property type="component" value="Chromosome"/>
</dbReference>
<dbReference type="GO" id="GO:0030604">
    <property type="term" value="F:1-deoxy-D-xylulose-5-phosphate reductoisomerase activity"/>
    <property type="evidence" value="ECO:0007669"/>
    <property type="project" value="UniProtKB-UniRule"/>
</dbReference>
<dbReference type="GO" id="GO:0030145">
    <property type="term" value="F:manganese ion binding"/>
    <property type="evidence" value="ECO:0007669"/>
    <property type="project" value="TreeGrafter"/>
</dbReference>
<dbReference type="GO" id="GO:0070402">
    <property type="term" value="F:NADPH binding"/>
    <property type="evidence" value="ECO:0007669"/>
    <property type="project" value="InterPro"/>
</dbReference>
<dbReference type="GO" id="GO:0051484">
    <property type="term" value="P:isopentenyl diphosphate biosynthetic process, methylerythritol 4-phosphate pathway involved in terpenoid biosynthetic process"/>
    <property type="evidence" value="ECO:0007669"/>
    <property type="project" value="TreeGrafter"/>
</dbReference>
<dbReference type="Gene3D" id="1.10.1740.10">
    <property type="match status" value="1"/>
</dbReference>
<dbReference type="Gene3D" id="3.40.50.720">
    <property type="entry name" value="NAD(P)-binding Rossmann-like Domain"/>
    <property type="match status" value="1"/>
</dbReference>
<dbReference type="HAMAP" id="MF_00183">
    <property type="entry name" value="DXP_reductoisom"/>
    <property type="match status" value="1"/>
</dbReference>
<dbReference type="InterPro" id="IPR003821">
    <property type="entry name" value="DXP_reductoisomerase"/>
</dbReference>
<dbReference type="InterPro" id="IPR013644">
    <property type="entry name" value="DXP_reductoisomerase_C"/>
</dbReference>
<dbReference type="InterPro" id="IPR013512">
    <property type="entry name" value="DXP_reductoisomerase_N"/>
</dbReference>
<dbReference type="InterPro" id="IPR026877">
    <property type="entry name" value="DXPR_C"/>
</dbReference>
<dbReference type="InterPro" id="IPR036169">
    <property type="entry name" value="DXPR_C_sf"/>
</dbReference>
<dbReference type="InterPro" id="IPR036291">
    <property type="entry name" value="NAD(P)-bd_dom_sf"/>
</dbReference>
<dbReference type="NCBIfam" id="TIGR00243">
    <property type="entry name" value="Dxr"/>
    <property type="match status" value="1"/>
</dbReference>
<dbReference type="PANTHER" id="PTHR30525">
    <property type="entry name" value="1-DEOXY-D-XYLULOSE 5-PHOSPHATE REDUCTOISOMERASE"/>
    <property type="match status" value="1"/>
</dbReference>
<dbReference type="PANTHER" id="PTHR30525:SF0">
    <property type="entry name" value="1-DEOXY-D-XYLULOSE 5-PHOSPHATE REDUCTOISOMERASE, CHLOROPLASTIC"/>
    <property type="match status" value="1"/>
</dbReference>
<dbReference type="Pfam" id="PF08436">
    <property type="entry name" value="DXP_redisom_C"/>
    <property type="match status" value="1"/>
</dbReference>
<dbReference type="Pfam" id="PF02670">
    <property type="entry name" value="DXP_reductoisom"/>
    <property type="match status" value="1"/>
</dbReference>
<dbReference type="Pfam" id="PF13288">
    <property type="entry name" value="DXPR_C"/>
    <property type="match status" value="1"/>
</dbReference>
<dbReference type="PIRSF" id="PIRSF006205">
    <property type="entry name" value="Dxp_reductismrs"/>
    <property type="match status" value="1"/>
</dbReference>
<dbReference type="SUPFAM" id="SSF69055">
    <property type="entry name" value="1-deoxy-D-xylulose-5-phosphate reductoisomerase, C-terminal domain"/>
    <property type="match status" value="1"/>
</dbReference>
<dbReference type="SUPFAM" id="SSF55347">
    <property type="entry name" value="Glyceraldehyde-3-phosphate dehydrogenase-like, C-terminal domain"/>
    <property type="match status" value="1"/>
</dbReference>
<dbReference type="SUPFAM" id="SSF51735">
    <property type="entry name" value="NAD(P)-binding Rossmann-fold domains"/>
    <property type="match status" value="1"/>
</dbReference>
<reference key="1">
    <citation type="submission" date="2007-07" db="EMBL/GenBank/DDBJ databases">
        <title>Complete genome sequence of Campylobacter jejuni subsp doylei 269.97 isolated from human blood.</title>
        <authorList>
            <person name="Fouts D.E."/>
            <person name="Mongodin E.F."/>
            <person name="Puiu D."/>
            <person name="Sebastian Y."/>
            <person name="Miller W.G."/>
            <person name="Mandrell R.E."/>
            <person name="Lastovica A.J."/>
            <person name="Nelson K.E."/>
        </authorList>
    </citation>
    <scope>NUCLEOTIDE SEQUENCE [LARGE SCALE GENOMIC DNA]</scope>
    <source>
        <strain>ATCC BAA-1458 / RM4099 / 269.97</strain>
    </source>
</reference>
<proteinExistence type="inferred from homology"/>
<protein>
    <recommendedName>
        <fullName evidence="1">1-deoxy-D-xylulose 5-phosphate reductoisomerase</fullName>
        <shortName evidence="1">DXP reductoisomerase</shortName>
        <ecNumber evidence="1">1.1.1.267</ecNumber>
    </recommendedName>
    <alternativeName>
        <fullName evidence="1">1-deoxyxylulose-5-phosphate reductoisomerase</fullName>
    </alternativeName>
    <alternativeName>
        <fullName evidence="1">2-C-methyl-D-erythritol 4-phosphate synthase</fullName>
    </alternativeName>
</protein>
<accession>A7H243</accession>